<accession>Q5HG00</accession>
<evidence type="ECO:0000255" key="1">
    <source>
        <dbReference type="HAMAP-Rule" id="MF_01538"/>
    </source>
</evidence>
<gene>
    <name type="ordered locus">SACOL1456</name>
</gene>
<sequence length="73" mass="8870">MKNYSFYQFVMTVRGRHDDKGRLAEEIFDDLAFPKHDDDFNILSDYIETHGDFTLPMSVFDDLYEEYTEWLKF</sequence>
<protein>
    <recommendedName>
        <fullName evidence="1">UPF0346 protein SACOL1456</fullName>
    </recommendedName>
</protein>
<feature type="chain" id="PRO_0000164281" description="UPF0346 protein SACOL1456">
    <location>
        <begin position="1"/>
        <end position="73"/>
    </location>
</feature>
<reference key="1">
    <citation type="journal article" date="2005" name="J. Bacteriol.">
        <title>Insights on evolution of virulence and resistance from the complete genome analysis of an early methicillin-resistant Staphylococcus aureus strain and a biofilm-producing methicillin-resistant Staphylococcus epidermidis strain.</title>
        <authorList>
            <person name="Gill S.R."/>
            <person name="Fouts D.E."/>
            <person name="Archer G.L."/>
            <person name="Mongodin E.F."/>
            <person name="DeBoy R.T."/>
            <person name="Ravel J."/>
            <person name="Paulsen I.T."/>
            <person name="Kolonay J.F."/>
            <person name="Brinkac L.M."/>
            <person name="Beanan M.J."/>
            <person name="Dodson R.J."/>
            <person name="Daugherty S.C."/>
            <person name="Madupu R."/>
            <person name="Angiuoli S.V."/>
            <person name="Durkin A.S."/>
            <person name="Haft D.H."/>
            <person name="Vamathevan J.J."/>
            <person name="Khouri H."/>
            <person name="Utterback T.R."/>
            <person name="Lee C."/>
            <person name="Dimitrov G."/>
            <person name="Jiang L."/>
            <person name="Qin H."/>
            <person name="Weidman J."/>
            <person name="Tran K."/>
            <person name="Kang K.H."/>
            <person name="Hance I.R."/>
            <person name="Nelson K.E."/>
            <person name="Fraser C.M."/>
        </authorList>
    </citation>
    <scope>NUCLEOTIDE SEQUENCE [LARGE SCALE GENOMIC DNA]</scope>
    <source>
        <strain>COL</strain>
    </source>
</reference>
<dbReference type="EMBL" id="CP000046">
    <property type="protein sequence ID" value="AAW36659.1"/>
    <property type="molecule type" value="Genomic_DNA"/>
</dbReference>
<dbReference type="RefSeq" id="WP_000801007.1">
    <property type="nucleotide sequence ID" value="NZ_JBGOFO010000003.1"/>
</dbReference>
<dbReference type="SMR" id="Q5HG00"/>
<dbReference type="KEGG" id="sac:SACOL1456"/>
<dbReference type="HOGENOM" id="CLU_177534_1_0_9"/>
<dbReference type="Proteomes" id="UP000000530">
    <property type="component" value="Chromosome"/>
</dbReference>
<dbReference type="Gene3D" id="1.10.150.260">
    <property type="entry name" value="YozE SAM-like"/>
    <property type="match status" value="1"/>
</dbReference>
<dbReference type="HAMAP" id="MF_01538">
    <property type="entry name" value="UPF0346"/>
    <property type="match status" value="1"/>
</dbReference>
<dbReference type="InterPro" id="IPR010673">
    <property type="entry name" value="UPF0346"/>
</dbReference>
<dbReference type="InterPro" id="IPR023089">
    <property type="entry name" value="YozE_SAM-like"/>
</dbReference>
<dbReference type="InterPro" id="IPR036806">
    <property type="entry name" value="YozE_SAM-like_sf"/>
</dbReference>
<dbReference type="NCBIfam" id="NF010193">
    <property type="entry name" value="PRK13672.1"/>
    <property type="match status" value="1"/>
</dbReference>
<dbReference type="Pfam" id="PF06855">
    <property type="entry name" value="YozE_SAM_like"/>
    <property type="match status" value="1"/>
</dbReference>
<dbReference type="PIRSF" id="PIRSF037262">
    <property type="entry name" value="UCP037262"/>
    <property type="match status" value="1"/>
</dbReference>
<dbReference type="SUPFAM" id="SSF140652">
    <property type="entry name" value="YozE-like"/>
    <property type="match status" value="1"/>
</dbReference>
<organism>
    <name type="scientific">Staphylococcus aureus (strain COL)</name>
    <dbReference type="NCBI Taxonomy" id="93062"/>
    <lineage>
        <taxon>Bacteria</taxon>
        <taxon>Bacillati</taxon>
        <taxon>Bacillota</taxon>
        <taxon>Bacilli</taxon>
        <taxon>Bacillales</taxon>
        <taxon>Staphylococcaceae</taxon>
        <taxon>Staphylococcus</taxon>
    </lineage>
</organism>
<proteinExistence type="inferred from homology"/>
<name>Y1456_STAAC</name>
<comment type="similarity">
    <text evidence="1">Belongs to the UPF0346 family.</text>
</comment>